<name>Y602_ENCCU</name>
<feature type="chain" id="PRO_0000223129" description="UPF0328 protein ECU06_0020/ECU06_1700">
    <location>
        <begin position="1"/>
        <end position="280"/>
    </location>
</feature>
<comment type="similarity">
    <text evidence="1">Belongs to the UPF0328 family.</text>
</comment>
<sequence>MNTTHVPEPHRTEQHAENQRHWRKILGIAPIVSIAFPATMYFISDEDSFEDSLFLRFITVLLPFSYSAVQYALLHTNWKSHNKPERILQSILYYTLNLLFLAFSIISILSIIAFTLAEWEDDDWENNNDPIIFSFILPSFTVPLTYLLSTSCCLVPGQIGFTDTGINVLVDILILLCSAGDLVPAFDEVKHCYYFAIISSILILIRLLREKLSPEKQSPPPTAPWRIAVFVLILISIVIAYALLAYLIMNADIFDNYSISFGKVERASFHQSPANKQLIS</sequence>
<reference key="1">
    <citation type="journal article" date="2001" name="Nature">
        <title>Genome sequence and gene compaction of the eukaryote parasite Encephalitozoon cuniculi.</title>
        <authorList>
            <person name="Katinka M.D."/>
            <person name="Duprat S."/>
            <person name="Cornillot E."/>
            <person name="Metenier G."/>
            <person name="Thomarat F."/>
            <person name="Prensier G."/>
            <person name="Barbe V."/>
            <person name="Peyretaillade E."/>
            <person name="Brottier P."/>
            <person name="Wincker P."/>
            <person name="Delbac F."/>
            <person name="El Alaoui H."/>
            <person name="Peyret P."/>
            <person name="Saurin W."/>
            <person name="Gouy M."/>
            <person name="Weissenbach J."/>
            <person name="Vivares C.P."/>
        </authorList>
    </citation>
    <scope>NUCLEOTIDE SEQUENCE [LARGE SCALE GENOMIC DNA]</scope>
    <source>
        <strain>GB-M1</strain>
    </source>
</reference>
<organism>
    <name type="scientific">Encephalitozoon cuniculi (strain GB-M1)</name>
    <name type="common">Microsporidian parasite</name>
    <dbReference type="NCBI Taxonomy" id="284813"/>
    <lineage>
        <taxon>Eukaryota</taxon>
        <taxon>Fungi</taxon>
        <taxon>Fungi incertae sedis</taxon>
        <taxon>Microsporidia</taxon>
        <taxon>Unikaryonidae</taxon>
        <taxon>Encephalitozoon</taxon>
    </lineage>
</organism>
<evidence type="ECO:0000305" key="1"/>
<dbReference type="EMBL" id="AL590446">
    <property type="protein sequence ID" value="CAD25362.1"/>
    <property type="molecule type" value="Genomic_DNA"/>
</dbReference>
<dbReference type="EMBL" id="AL590446">
    <property type="protein sequence ID" value="CAD25531.1"/>
    <property type="molecule type" value="Genomic_DNA"/>
</dbReference>
<dbReference type="RefSeq" id="NP_585758.1">
    <property type="nucleotide sequence ID" value="NM_001041380.1"/>
</dbReference>
<dbReference type="RefSeq" id="NP_585927.1">
    <property type="nucleotide sequence ID" value="NM_001041549.1"/>
</dbReference>
<dbReference type="GeneID" id="859181"/>
<dbReference type="GeneID" id="859355"/>
<dbReference type="KEGG" id="ecu:ECU06_0020"/>
<dbReference type="KEGG" id="ecu:ECU06_1700"/>
<dbReference type="VEuPathDB" id="MicrosporidiaDB:ECU06_0020"/>
<dbReference type="VEuPathDB" id="MicrosporidiaDB:ECU06_1700"/>
<dbReference type="HOGENOM" id="CLU_059413_0_0_1"/>
<dbReference type="InParanoid" id="Q8ST81"/>
<dbReference type="Proteomes" id="UP000000819">
    <property type="component" value="Chromosome VI"/>
</dbReference>
<dbReference type="InterPro" id="IPR019081">
    <property type="entry name" value="UPF0328"/>
</dbReference>
<dbReference type="Pfam" id="PF09591">
    <property type="entry name" value="DUF2463"/>
    <property type="match status" value="1"/>
</dbReference>
<accession>Q8ST81</accession>
<proteinExistence type="inferred from homology"/>
<gene>
    <name type="ordered locus">ECU06_0020</name>
</gene>
<gene>
    <name type="ordered locus">ECU06_1700</name>
</gene>
<protein>
    <recommendedName>
        <fullName>UPF0328 protein ECU06_0020/ECU06_1700</fullName>
    </recommendedName>
</protein>
<keyword id="KW-1185">Reference proteome</keyword>